<organism>
    <name type="scientific">Pseudomonas paraeruginosa (strain DSM 24068 / PA7)</name>
    <name type="common">Pseudomonas aeruginosa (strain PA7)</name>
    <dbReference type="NCBI Taxonomy" id="381754"/>
    <lineage>
        <taxon>Bacteria</taxon>
        <taxon>Pseudomonadati</taxon>
        <taxon>Pseudomonadota</taxon>
        <taxon>Gammaproteobacteria</taxon>
        <taxon>Pseudomonadales</taxon>
        <taxon>Pseudomonadaceae</taxon>
        <taxon>Pseudomonas</taxon>
        <taxon>Pseudomonas paraeruginosa</taxon>
    </lineage>
</organism>
<keyword id="KW-0028">Amino-acid biosynthesis</keyword>
<keyword id="KW-0057">Aromatic amino acid biosynthesis</keyword>
<keyword id="KW-0521">NADP</keyword>
<keyword id="KW-0560">Oxidoreductase</keyword>
<protein>
    <recommendedName>
        <fullName evidence="1">Shikimate dehydrogenase (NADP(+))</fullName>
        <shortName evidence="1">SDH</shortName>
        <ecNumber evidence="1">1.1.1.25</ecNumber>
    </recommendedName>
</protein>
<feature type="chain" id="PRO_1000204271" description="Shikimate dehydrogenase (NADP(+))">
    <location>
        <begin position="1"/>
        <end position="274"/>
    </location>
</feature>
<feature type="active site" description="Proton acceptor" evidence="1">
    <location>
        <position position="64"/>
    </location>
</feature>
<feature type="binding site" evidence="1">
    <location>
        <begin position="14"/>
        <end position="16"/>
    </location>
    <ligand>
        <name>shikimate</name>
        <dbReference type="ChEBI" id="CHEBI:36208"/>
    </ligand>
</feature>
<feature type="binding site" evidence="1">
    <location>
        <position position="60"/>
    </location>
    <ligand>
        <name>shikimate</name>
        <dbReference type="ChEBI" id="CHEBI:36208"/>
    </ligand>
</feature>
<feature type="binding site" evidence="1">
    <location>
        <position position="76"/>
    </location>
    <ligand>
        <name>NADP(+)</name>
        <dbReference type="ChEBI" id="CHEBI:58349"/>
    </ligand>
</feature>
<feature type="binding site" evidence="1">
    <location>
        <position position="85"/>
    </location>
    <ligand>
        <name>shikimate</name>
        <dbReference type="ChEBI" id="CHEBI:36208"/>
    </ligand>
</feature>
<feature type="binding site" evidence="1">
    <location>
        <position position="101"/>
    </location>
    <ligand>
        <name>shikimate</name>
        <dbReference type="ChEBI" id="CHEBI:36208"/>
    </ligand>
</feature>
<feature type="binding site" evidence="1">
    <location>
        <begin position="126"/>
        <end position="130"/>
    </location>
    <ligand>
        <name>NADP(+)</name>
        <dbReference type="ChEBI" id="CHEBI:58349"/>
    </ligand>
</feature>
<feature type="binding site" evidence="1">
    <location>
        <begin position="150"/>
        <end position="155"/>
    </location>
    <ligand>
        <name>NADP(+)</name>
        <dbReference type="ChEBI" id="CHEBI:58349"/>
    </ligand>
</feature>
<feature type="binding site" evidence="1">
    <location>
        <position position="214"/>
    </location>
    <ligand>
        <name>NADP(+)</name>
        <dbReference type="ChEBI" id="CHEBI:58349"/>
    </ligand>
</feature>
<feature type="binding site" evidence="1">
    <location>
        <position position="216"/>
    </location>
    <ligand>
        <name>shikimate</name>
        <dbReference type="ChEBI" id="CHEBI:36208"/>
    </ligand>
</feature>
<feature type="binding site" evidence="1">
    <location>
        <position position="238"/>
    </location>
    <ligand>
        <name>NADP(+)</name>
        <dbReference type="ChEBI" id="CHEBI:58349"/>
    </ligand>
</feature>
<name>AROE_PSEP7</name>
<comment type="function">
    <text evidence="1">Involved in the biosynthesis of the chorismate, which leads to the biosynthesis of aromatic amino acids. Catalyzes the reversible NADPH linked reduction of 3-dehydroshikimate (DHSA) to yield shikimate (SA).</text>
</comment>
<comment type="catalytic activity">
    <reaction evidence="1">
        <text>shikimate + NADP(+) = 3-dehydroshikimate + NADPH + H(+)</text>
        <dbReference type="Rhea" id="RHEA:17737"/>
        <dbReference type="ChEBI" id="CHEBI:15378"/>
        <dbReference type="ChEBI" id="CHEBI:16630"/>
        <dbReference type="ChEBI" id="CHEBI:36208"/>
        <dbReference type="ChEBI" id="CHEBI:57783"/>
        <dbReference type="ChEBI" id="CHEBI:58349"/>
        <dbReference type="EC" id="1.1.1.25"/>
    </reaction>
</comment>
<comment type="pathway">
    <text evidence="1">Metabolic intermediate biosynthesis; chorismate biosynthesis; chorismate from D-erythrose 4-phosphate and phosphoenolpyruvate: step 4/7.</text>
</comment>
<comment type="subunit">
    <text evidence="1">Homodimer.</text>
</comment>
<comment type="similarity">
    <text evidence="1">Belongs to the shikimate dehydrogenase family.</text>
</comment>
<gene>
    <name evidence="1" type="primary">aroE</name>
    <name type="ordered locus">PSPA7_0026</name>
</gene>
<evidence type="ECO:0000255" key="1">
    <source>
        <dbReference type="HAMAP-Rule" id="MF_00222"/>
    </source>
</evidence>
<proteinExistence type="inferred from homology"/>
<reference key="1">
    <citation type="submission" date="2007-06" db="EMBL/GenBank/DDBJ databases">
        <authorList>
            <person name="Dodson R.J."/>
            <person name="Harkins D."/>
            <person name="Paulsen I.T."/>
        </authorList>
    </citation>
    <scope>NUCLEOTIDE SEQUENCE [LARGE SCALE GENOMIC DNA]</scope>
    <source>
        <strain>DSM 24068 / PA7</strain>
    </source>
</reference>
<accession>A6UX87</accession>
<dbReference type="EC" id="1.1.1.25" evidence="1"/>
<dbReference type="EMBL" id="CP000744">
    <property type="protein sequence ID" value="ABR81362.1"/>
    <property type="molecule type" value="Genomic_DNA"/>
</dbReference>
<dbReference type="RefSeq" id="WP_003156232.1">
    <property type="nucleotide sequence ID" value="NC_009656.1"/>
</dbReference>
<dbReference type="SMR" id="A6UX87"/>
<dbReference type="KEGG" id="pap:PSPA7_0026"/>
<dbReference type="HOGENOM" id="CLU_044063_2_1_6"/>
<dbReference type="UniPathway" id="UPA00053">
    <property type="reaction ID" value="UER00087"/>
</dbReference>
<dbReference type="Proteomes" id="UP000001582">
    <property type="component" value="Chromosome"/>
</dbReference>
<dbReference type="GO" id="GO:0005829">
    <property type="term" value="C:cytosol"/>
    <property type="evidence" value="ECO:0007669"/>
    <property type="project" value="TreeGrafter"/>
</dbReference>
<dbReference type="GO" id="GO:0050661">
    <property type="term" value="F:NADP binding"/>
    <property type="evidence" value="ECO:0007669"/>
    <property type="project" value="InterPro"/>
</dbReference>
<dbReference type="GO" id="GO:0004764">
    <property type="term" value="F:shikimate 3-dehydrogenase (NADP+) activity"/>
    <property type="evidence" value="ECO:0007669"/>
    <property type="project" value="UniProtKB-UniRule"/>
</dbReference>
<dbReference type="GO" id="GO:0008652">
    <property type="term" value="P:amino acid biosynthetic process"/>
    <property type="evidence" value="ECO:0007669"/>
    <property type="project" value="UniProtKB-KW"/>
</dbReference>
<dbReference type="GO" id="GO:0009073">
    <property type="term" value="P:aromatic amino acid family biosynthetic process"/>
    <property type="evidence" value="ECO:0007669"/>
    <property type="project" value="UniProtKB-KW"/>
</dbReference>
<dbReference type="GO" id="GO:0009423">
    <property type="term" value="P:chorismate biosynthetic process"/>
    <property type="evidence" value="ECO:0007669"/>
    <property type="project" value="UniProtKB-UniRule"/>
</dbReference>
<dbReference type="GO" id="GO:0019632">
    <property type="term" value="P:shikimate metabolic process"/>
    <property type="evidence" value="ECO:0007669"/>
    <property type="project" value="InterPro"/>
</dbReference>
<dbReference type="CDD" id="cd01065">
    <property type="entry name" value="NAD_bind_Shikimate_DH"/>
    <property type="match status" value="1"/>
</dbReference>
<dbReference type="FunFam" id="3.40.50.10860:FF:000006">
    <property type="entry name" value="Shikimate dehydrogenase (NADP(+))"/>
    <property type="match status" value="1"/>
</dbReference>
<dbReference type="FunFam" id="3.40.50.720:FF:000104">
    <property type="entry name" value="Shikimate dehydrogenase (NADP(+))"/>
    <property type="match status" value="1"/>
</dbReference>
<dbReference type="Gene3D" id="3.40.50.10860">
    <property type="entry name" value="Leucine Dehydrogenase, chain A, domain 1"/>
    <property type="match status" value="1"/>
</dbReference>
<dbReference type="Gene3D" id="3.40.50.720">
    <property type="entry name" value="NAD(P)-binding Rossmann-like Domain"/>
    <property type="match status" value="1"/>
</dbReference>
<dbReference type="HAMAP" id="MF_00222">
    <property type="entry name" value="Shikimate_DH_AroE"/>
    <property type="match status" value="1"/>
</dbReference>
<dbReference type="InterPro" id="IPR046346">
    <property type="entry name" value="Aminoacid_DH-like_N_sf"/>
</dbReference>
<dbReference type="InterPro" id="IPR036291">
    <property type="entry name" value="NAD(P)-bd_dom_sf"/>
</dbReference>
<dbReference type="InterPro" id="IPR041121">
    <property type="entry name" value="SDH_C"/>
</dbReference>
<dbReference type="InterPro" id="IPR011342">
    <property type="entry name" value="Shikimate_DH"/>
</dbReference>
<dbReference type="InterPro" id="IPR013708">
    <property type="entry name" value="Shikimate_DH-bd_N"/>
</dbReference>
<dbReference type="InterPro" id="IPR022893">
    <property type="entry name" value="Shikimate_DH_fam"/>
</dbReference>
<dbReference type="InterPro" id="IPR006151">
    <property type="entry name" value="Shikm_DH/Glu-tRNA_Rdtase"/>
</dbReference>
<dbReference type="NCBIfam" id="TIGR00507">
    <property type="entry name" value="aroE"/>
    <property type="match status" value="1"/>
</dbReference>
<dbReference type="NCBIfam" id="NF001310">
    <property type="entry name" value="PRK00258.1-2"/>
    <property type="match status" value="1"/>
</dbReference>
<dbReference type="PANTHER" id="PTHR21089:SF1">
    <property type="entry name" value="BIFUNCTIONAL 3-DEHYDROQUINATE DEHYDRATASE_SHIKIMATE DEHYDROGENASE, CHLOROPLASTIC"/>
    <property type="match status" value="1"/>
</dbReference>
<dbReference type="PANTHER" id="PTHR21089">
    <property type="entry name" value="SHIKIMATE DEHYDROGENASE"/>
    <property type="match status" value="1"/>
</dbReference>
<dbReference type="Pfam" id="PF18317">
    <property type="entry name" value="SDH_C"/>
    <property type="match status" value="1"/>
</dbReference>
<dbReference type="Pfam" id="PF01488">
    <property type="entry name" value="Shikimate_DH"/>
    <property type="match status" value="1"/>
</dbReference>
<dbReference type="Pfam" id="PF08501">
    <property type="entry name" value="Shikimate_dh_N"/>
    <property type="match status" value="1"/>
</dbReference>
<dbReference type="SUPFAM" id="SSF53223">
    <property type="entry name" value="Aminoacid dehydrogenase-like, N-terminal domain"/>
    <property type="match status" value="1"/>
</dbReference>
<dbReference type="SUPFAM" id="SSF51735">
    <property type="entry name" value="NAD(P)-binding Rossmann-fold domains"/>
    <property type="match status" value="1"/>
</dbReference>
<sequence>MDRYCVFGNPIGHSKSPLIHRLFAEQTGQALAYEAQLAPLDDFAGFARRFFEQGKGANVTVPFKEEAYRLVDELSERATRAGAVNTLVRLDGGRLRGDNTDGAGLLRDLTVNAGVQLRDRRVLLLGAGGAVRGVLAPFLGERPAQLLVANRTAEKAVALAGEFADLGAVRGCGFADVEGPFDLIVNGTSASLAGDVPPLAESVIERGRTVCYDMMYAKEATAFNRWAAERGAARTLDGLGMLVEQAAEAFFLWRGVRPASAPVLETLRRQLATG</sequence>